<feature type="chain" id="PRO_0000335697" description="4-diphosphocytidyl-2-C-methyl-D-erythritol kinase">
    <location>
        <begin position="1"/>
        <end position="289"/>
    </location>
</feature>
<feature type="active site" evidence="1">
    <location>
        <position position="11"/>
    </location>
</feature>
<feature type="active site" evidence="1">
    <location>
        <position position="137"/>
    </location>
</feature>
<feature type="binding site" evidence="1">
    <location>
        <begin position="95"/>
        <end position="105"/>
    </location>
    <ligand>
        <name>ATP</name>
        <dbReference type="ChEBI" id="CHEBI:30616"/>
    </ligand>
</feature>
<gene>
    <name evidence="1" type="primary">ispE</name>
    <name type="ordered locus">ASA_1172</name>
</gene>
<protein>
    <recommendedName>
        <fullName evidence="1">4-diphosphocytidyl-2-C-methyl-D-erythritol kinase</fullName>
        <shortName evidence="1">CMK</shortName>
        <ecNumber evidence="1">2.7.1.148</ecNumber>
    </recommendedName>
    <alternativeName>
        <fullName evidence="1">4-(cytidine-5'-diphospho)-2-C-methyl-D-erythritol kinase</fullName>
    </alternativeName>
</protein>
<dbReference type="EC" id="2.7.1.148" evidence="1"/>
<dbReference type="EMBL" id="CP000644">
    <property type="protein sequence ID" value="ABO89283.1"/>
    <property type="molecule type" value="Genomic_DNA"/>
</dbReference>
<dbReference type="RefSeq" id="WP_005317018.1">
    <property type="nucleotide sequence ID" value="NC_009348.1"/>
</dbReference>
<dbReference type="SMR" id="A4SK61"/>
<dbReference type="KEGG" id="asa:ASA_1172"/>
<dbReference type="eggNOG" id="COG1947">
    <property type="taxonomic scope" value="Bacteria"/>
</dbReference>
<dbReference type="HOGENOM" id="CLU_053057_3_0_6"/>
<dbReference type="UniPathway" id="UPA00056">
    <property type="reaction ID" value="UER00094"/>
</dbReference>
<dbReference type="Proteomes" id="UP000000225">
    <property type="component" value="Chromosome"/>
</dbReference>
<dbReference type="GO" id="GO:0050515">
    <property type="term" value="F:4-(cytidine 5'-diphospho)-2-C-methyl-D-erythritol kinase activity"/>
    <property type="evidence" value="ECO:0007669"/>
    <property type="project" value="UniProtKB-UniRule"/>
</dbReference>
<dbReference type="GO" id="GO:0005524">
    <property type="term" value="F:ATP binding"/>
    <property type="evidence" value="ECO:0007669"/>
    <property type="project" value="UniProtKB-UniRule"/>
</dbReference>
<dbReference type="GO" id="GO:0019288">
    <property type="term" value="P:isopentenyl diphosphate biosynthetic process, methylerythritol 4-phosphate pathway"/>
    <property type="evidence" value="ECO:0007669"/>
    <property type="project" value="UniProtKB-UniRule"/>
</dbReference>
<dbReference type="GO" id="GO:0016114">
    <property type="term" value="P:terpenoid biosynthetic process"/>
    <property type="evidence" value="ECO:0007669"/>
    <property type="project" value="InterPro"/>
</dbReference>
<dbReference type="Gene3D" id="3.30.230.10">
    <property type="match status" value="1"/>
</dbReference>
<dbReference type="Gene3D" id="3.30.70.890">
    <property type="entry name" value="GHMP kinase, C-terminal domain"/>
    <property type="match status" value="1"/>
</dbReference>
<dbReference type="HAMAP" id="MF_00061">
    <property type="entry name" value="IspE"/>
    <property type="match status" value="1"/>
</dbReference>
<dbReference type="InterPro" id="IPR013750">
    <property type="entry name" value="GHMP_kinase_C_dom"/>
</dbReference>
<dbReference type="InterPro" id="IPR036554">
    <property type="entry name" value="GHMP_kinase_C_sf"/>
</dbReference>
<dbReference type="InterPro" id="IPR006204">
    <property type="entry name" value="GHMP_kinase_N_dom"/>
</dbReference>
<dbReference type="InterPro" id="IPR004424">
    <property type="entry name" value="IspE"/>
</dbReference>
<dbReference type="InterPro" id="IPR020568">
    <property type="entry name" value="Ribosomal_Su5_D2-typ_SF"/>
</dbReference>
<dbReference type="InterPro" id="IPR014721">
    <property type="entry name" value="Ribsml_uS5_D2-typ_fold_subgr"/>
</dbReference>
<dbReference type="NCBIfam" id="TIGR00154">
    <property type="entry name" value="ispE"/>
    <property type="match status" value="1"/>
</dbReference>
<dbReference type="NCBIfam" id="NF011202">
    <property type="entry name" value="PRK14608.1"/>
    <property type="match status" value="1"/>
</dbReference>
<dbReference type="PANTHER" id="PTHR43527">
    <property type="entry name" value="4-DIPHOSPHOCYTIDYL-2-C-METHYL-D-ERYTHRITOL KINASE, CHLOROPLASTIC"/>
    <property type="match status" value="1"/>
</dbReference>
<dbReference type="PANTHER" id="PTHR43527:SF2">
    <property type="entry name" value="4-DIPHOSPHOCYTIDYL-2-C-METHYL-D-ERYTHRITOL KINASE, CHLOROPLASTIC"/>
    <property type="match status" value="1"/>
</dbReference>
<dbReference type="Pfam" id="PF08544">
    <property type="entry name" value="GHMP_kinases_C"/>
    <property type="match status" value="1"/>
</dbReference>
<dbReference type="Pfam" id="PF00288">
    <property type="entry name" value="GHMP_kinases_N"/>
    <property type="match status" value="1"/>
</dbReference>
<dbReference type="PIRSF" id="PIRSF010376">
    <property type="entry name" value="IspE"/>
    <property type="match status" value="1"/>
</dbReference>
<dbReference type="SUPFAM" id="SSF55060">
    <property type="entry name" value="GHMP Kinase, C-terminal domain"/>
    <property type="match status" value="1"/>
</dbReference>
<dbReference type="SUPFAM" id="SSF54211">
    <property type="entry name" value="Ribosomal protein S5 domain 2-like"/>
    <property type="match status" value="1"/>
</dbReference>
<proteinExistence type="inferred from homology"/>
<evidence type="ECO:0000255" key="1">
    <source>
        <dbReference type="HAMAP-Rule" id="MF_00061"/>
    </source>
</evidence>
<accession>A4SK61</accession>
<name>ISPE_AERS4</name>
<organism>
    <name type="scientific">Aeromonas salmonicida (strain A449)</name>
    <dbReference type="NCBI Taxonomy" id="382245"/>
    <lineage>
        <taxon>Bacteria</taxon>
        <taxon>Pseudomonadati</taxon>
        <taxon>Pseudomonadota</taxon>
        <taxon>Gammaproteobacteria</taxon>
        <taxon>Aeromonadales</taxon>
        <taxon>Aeromonadaceae</taxon>
        <taxon>Aeromonas</taxon>
    </lineage>
</organism>
<reference key="1">
    <citation type="journal article" date="2008" name="BMC Genomics">
        <title>The genome of Aeromonas salmonicida subsp. salmonicida A449: insights into the evolution of a fish pathogen.</title>
        <authorList>
            <person name="Reith M.E."/>
            <person name="Singh R.K."/>
            <person name="Curtis B."/>
            <person name="Boyd J.M."/>
            <person name="Bouevitch A."/>
            <person name="Kimball J."/>
            <person name="Munholland J."/>
            <person name="Murphy C."/>
            <person name="Sarty D."/>
            <person name="Williams J."/>
            <person name="Nash J.H."/>
            <person name="Johnson S.C."/>
            <person name="Brown L.L."/>
        </authorList>
    </citation>
    <scope>NUCLEOTIDE SEQUENCE [LARGE SCALE GENOMIC DNA]</scope>
    <source>
        <strain>A449</strain>
    </source>
</reference>
<keyword id="KW-0067">ATP-binding</keyword>
<keyword id="KW-0414">Isoprene biosynthesis</keyword>
<keyword id="KW-0418">Kinase</keyword>
<keyword id="KW-0547">Nucleotide-binding</keyword>
<keyword id="KW-0808">Transferase</keyword>
<sequence>MATIRWPAPAKLNLFLNVNGRRPDGYHELQTLFIFLDHGDWLEFEPLPDTDQLTLSPAIPGVPDEQNLIIRAARLLQARLPSPQGAHIRLEKLLPMGGGIGGGSSDAATTLVALNHLWQAGLGEDELAELGVQLGADVPVFVRGRAAFAEGVGERLQPVELPGAWYLVLKPDCHVATAAVFQDPDLPRATPKMAFHNLLEGEWKNDCELLVKKRYPEVANALGWLLEYAPSRMTGTGACVFAQFEDEKAAREVLAKVPKRWDGFVAKGENISPLFVTLQQISDWDIAKR</sequence>
<comment type="function">
    <text evidence="1">Catalyzes the phosphorylation of the position 2 hydroxy group of 4-diphosphocytidyl-2C-methyl-D-erythritol.</text>
</comment>
<comment type="catalytic activity">
    <reaction evidence="1">
        <text>4-CDP-2-C-methyl-D-erythritol + ATP = 4-CDP-2-C-methyl-D-erythritol 2-phosphate + ADP + H(+)</text>
        <dbReference type="Rhea" id="RHEA:18437"/>
        <dbReference type="ChEBI" id="CHEBI:15378"/>
        <dbReference type="ChEBI" id="CHEBI:30616"/>
        <dbReference type="ChEBI" id="CHEBI:57823"/>
        <dbReference type="ChEBI" id="CHEBI:57919"/>
        <dbReference type="ChEBI" id="CHEBI:456216"/>
        <dbReference type="EC" id="2.7.1.148"/>
    </reaction>
</comment>
<comment type="pathway">
    <text evidence="1">Isoprenoid biosynthesis; isopentenyl diphosphate biosynthesis via DXP pathway; isopentenyl diphosphate from 1-deoxy-D-xylulose 5-phosphate: step 3/6.</text>
</comment>
<comment type="similarity">
    <text evidence="1">Belongs to the GHMP kinase family. IspE subfamily.</text>
</comment>